<protein>
    <recommendedName>
        <fullName>Nodulation protein Z</fullName>
        <ecNumber>2.4.1.-</ecNumber>
    </recommendedName>
</protein>
<reference key="1">
    <citation type="journal article" date="1994" name="J. Bacteriol.">
        <title>nodZ, a unique host-specific nodulation gene, is involved in the fucosylation of the lipooligosaccharide nodulation signal of Bradyrhizobium japonicum.</title>
        <authorList>
            <person name="Stacey G."/>
            <person name="Luka S."/>
            <person name="Sanjuan J."/>
            <person name="Banfalvi Z."/>
            <person name="Nieuwkoop A.J."/>
            <person name="Chun J.Y."/>
            <person name="Forsberg L.S."/>
            <person name="Carlson R."/>
        </authorList>
    </citation>
    <scope>NUCLEOTIDE SEQUENCE [GENOMIC DNA]</scope>
    <source>
        <strain>JCM 10833 / BCRC 13528 / IAM 13628 / NBRC 14792 / USDA 110</strain>
    </source>
</reference>
<reference key="2">
    <citation type="journal article" date="2001" name="J. Bacteriol.">
        <title>Potential symbiosis-specific genes uncovered by sequencing a 410-kb DNA region of the Bradyrhizobium japonicum chromosome.</title>
        <authorList>
            <person name="Goettfert M."/>
            <person name="Roethlisberger S."/>
            <person name="Kuendig C."/>
            <person name="Beck C."/>
            <person name="Marty R."/>
            <person name="Hennecke H."/>
        </authorList>
    </citation>
    <scope>NUCLEOTIDE SEQUENCE [GENOMIC DNA]</scope>
    <source>
        <strain>USDA 110spc4</strain>
    </source>
</reference>
<reference key="3">
    <citation type="journal article" date="2002" name="DNA Res.">
        <title>Complete genomic sequence of nitrogen-fixing symbiotic bacterium Bradyrhizobium japonicum USDA110.</title>
        <authorList>
            <person name="Kaneko T."/>
            <person name="Nakamura Y."/>
            <person name="Sato S."/>
            <person name="Minamisawa K."/>
            <person name="Uchiumi T."/>
            <person name="Sasamoto S."/>
            <person name="Watanabe A."/>
            <person name="Idesawa K."/>
            <person name="Iriguchi M."/>
            <person name="Kawashima K."/>
            <person name="Kohara M."/>
            <person name="Matsumoto M."/>
            <person name="Shimpo S."/>
            <person name="Tsuruoka H."/>
            <person name="Wada T."/>
            <person name="Yamada M."/>
            <person name="Tabata S."/>
        </authorList>
    </citation>
    <scope>NUCLEOTIDE SEQUENCE [LARGE SCALE GENOMIC DNA]</scope>
    <source>
        <strain>JCM 10833 / BCRC 13528 / IAM 13628 / NBRC 14792 / USDA 110</strain>
    </source>
</reference>
<accession>Q45271</accession>
<accession>Q9AMY4</accession>
<dbReference type="EC" id="2.4.1.-"/>
<dbReference type="EMBL" id="L22756">
    <property type="protein sequence ID" value="AAB58813.1"/>
    <property type="status" value="ALT_FRAME"/>
    <property type="molecule type" value="Genomic_DNA"/>
</dbReference>
<dbReference type="EMBL" id="AH010242">
    <property type="protein sequence ID" value="AAG61006.1"/>
    <property type="molecule type" value="Genomic_DNA"/>
</dbReference>
<dbReference type="EMBL" id="BA000040">
    <property type="protein sequence ID" value="BAC47300.1"/>
    <property type="molecule type" value="Genomic_DNA"/>
</dbReference>
<dbReference type="PIR" id="A36959">
    <property type="entry name" value="A36959"/>
</dbReference>
<dbReference type="RefSeq" id="NP_768675.1">
    <property type="nucleotide sequence ID" value="NC_004463.1"/>
</dbReference>
<dbReference type="RefSeq" id="WP_011084832.1">
    <property type="nucleotide sequence ID" value="NZ_CP011360.1"/>
</dbReference>
<dbReference type="SMR" id="Q45271"/>
<dbReference type="STRING" id="224911.AAV28_07010"/>
<dbReference type="CAZy" id="GT23">
    <property type="family name" value="Glycosyltransferase Family 23"/>
</dbReference>
<dbReference type="EnsemblBacteria" id="BAC47300">
    <property type="protein sequence ID" value="BAC47300"/>
    <property type="gene ID" value="BAC47300"/>
</dbReference>
<dbReference type="KEGG" id="bja:blr2035"/>
<dbReference type="eggNOG" id="ENOG503190F">
    <property type="taxonomic scope" value="Bacteria"/>
</dbReference>
<dbReference type="HOGENOM" id="CLU_846979_0_0_5"/>
<dbReference type="InParanoid" id="Q45271"/>
<dbReference type="OrthoDB" id="7405520at2"/>
<dbReference type="BRENDA" id="2.4.1.68">
    <property type="organism ID" value="929"/>
</dbReference>
<dbReference type="Proteomes" id="UP000002526">
    <property type="component" value="Chromosome"/>
</dbReference>
<dbReference type="GO" id="GO:0016758">
    <property type="term" value="F:hexosyltransferase activity"/>
    <property type="evidence" value="ECO:0007669"/>
    <property type="project" value="InterPro"/>
</dbReference>
<dbReference type="GO" id="GO:0009312">
    <property type="term" value="P:oligosaccharide biosynthetic process"/>
    <property type="evidence" value="ECO:0007669"/>
    <property type="project" value="InterPro"/>
</dbReference>
<dbReference type="Gene3D" id="3.40.50.11340">
    <property type="match status" value="1"/>
</dbReference>
<dbReference type="Gene3D" id="3.40.50.11350">
    <property type="match status" value="1"/>
</dbReference>
<dbReference type="InterPro" id="IPR027350">
    <property type="entry name" value="GT23_dom"/>
</dbReference>
<dbReference type="InterPro" id="IPR008716">
    <property type="entry name" value="NodZ"/>
</dbReference>
<dbReference type="Pfam" id="PF05830">
    <property type="entry name" value="NodZ"/>
    <property type="match status" value="1"/>
</dbReference>
<dbReference type="PIRSF" id="PIRSF020513">
    <property type="entry name" value="6alphaFUT_NodZ"/>
    <property type="match status" value="1"/>
</dbReference>
<dbReference type="PROSITE" id="PS51659">
    <property type="entry name" value="GT23"/>
    <property type="match status" value="1"/>
</dbReference>
<proteinExistence type="inferred from homology"/>
<evidence type="ECO:0000255" key="1">
    <source>
        <dbReference type="PROSITE-ProRule" id="PRU00992"/>
    </source>
</evidence>
<evidence type="ECO:0000305" key="2"/>
<sequence>MKFYRCSSPAPRFQAVTPGEKIRETSVLTSLVQPGAREKARQMVSGSSNDRFVVSRRRTGFGDCLWSLAAAWRFAKQTGRTLAIDWRGSCYLDEPFTNAFPVFFEPVEDIGGVRVICDDDINTRSFPGPFFPTWWNKPSFDCIYRPDEQIFRERDQLDQLFQSQRDSDANTVVCDACLMWRCDQEAEREIFRSIKPRPEIQARIDAIYREHFEPYSVIGIHVRHGNGEDIMGHAPYWADTERALRQIYNAIDEARSLSHAKPVRAFLCTDSALVLEQVSVKFPDVFAIPKQFQAPQAGPLHHPALGAEGGFSALTEMYLLARCDTVIRFPPTSAFTRYARLFAPRVIEFDLNDPGRLILIEDNSQALMAS</sequence>
<name>NODZ_BRADU</name>
<keyword id="KW-0328">Glycosyltransferase</keyword>
<keyword id="KW-0536">Nodulation</keyword>
<keyword id="KW-1185">Reference proteome</keyword>
<keyword id="KW-0808">Transferase</keyword>
<organism>
    <name type="scientific">Bradyrhizobium diazoefficiens (strain JCM 10833 / BCRC 13528 / IAM 13628 / NBRC 14792 / USDA 110)</name>
    <dbReference type="NCBI Taxonomy" id="224911"/>
    <lineage>
        <taxon>Bacteria</taxon>
        <taxon>Pseudomonadati</taxon>
        <taxon>Pseudomonadota</taxon>
        <taxon>Alphaproteobacteria</taxon>
        <taxon>Hyphomicrobiales</taxon>
        <taxon>Nitrobacteraceae</taxon>
        <taxon>Bradyrhizobium</taxon>
    </lineage>
</organism>
<gene>
    <name type="primary">nodZ</name>
    <name type="ordered locus">blr2035</name>
</gene>
<feature type="chain" id="PRO_0000096918" description="Nodulation protein Z">
    <location>
        <begin position="1"/>
        <end position="370"/>
    </location>
</feature>
<feature type="domain" description="GT23" evidence="1">
    <location>
        <begin position="47"/>
        <end position="361"/>
    </location>
</feature>
<comment type="function">
    <text>Fucosyltransferase which adds the fucose moiety of the nod factor on its terminal reducing N-acetylglucosamine end. Uses GDP-fucose as the donor group.</text>
</comment>
<comment type="similarity">
    <text evidence="1">Belongs to the glycosyltransferase 23 family.</text>
</comment>
<comment type="sequence caution" evidence="2">
    <conflict type="frameshift">
        <sequence resource="EMBL-CDS" id="AAB58813"/>
    </conflict>
</comment>